<evidence type="ECO:0000250" key="1"/>
<evidence type="ECO:0000255" key="2">
    <source>
        <dbReference type="PROSITE-ProRule" id="PRU00159"/>
    </source>
</evidence>
<evidence type="ECO:0000255" key="3">
    <source>
        <dbReference type="PROSITE-ProRule" id="PRU10027"/>
    </source>
</evidence>
<evidence type="ECO:0000269" key="4">
    <source>
    </source>
</evidence>
<evidence type="ECO:0000305" key="5"/>
<organism>
    <name type="scientific">Wallemia ichthyophaga (strain EXF-994 / CBS 113033)</name>
    <dbReference type="NCBI Taxonomy" id="1299270"/>
    <lineage>
        <taxon>Eukaryota</taxon>
        <taxon>Fungi</taxon>
        <taxon>Dikarya</taxon>
        <taxon>Basidiomycota</taxon>
        <taxon>Wallemiomycotina</taxon>
        <taxon>Wallemiomycetes</taxon>
        <taxon>Wallemiales</taxon>
        <taxon>Wallemiaceae</taxon>
        <taxon>Wallemia</taxon>
    </lineage>
</organism>
<proteinExistence type="evidence at protein level"/>
<keyword id="KW-0010">Activator</keyword>
<keyword id="KW-0067">ATP-binding</keyword>
<keyword id="KW-0963">Cytoplasm</keyword>
<keyword id="KW-0418">Kinase</keyword>
<keyword id="KW-0547">Nucleotide-binding</keyword>
<keyword id="KW-0539">Nucleus</keyword>
<keyword id="KW-0597">Phosphoprotein</keyword>
<keyword id="KW-1185">Reference proteome</keyword>
<keyword id="KW-0723">Serine/threonine-protein kinase</keyword>
<keyword id="KW-0804">Transcription</keyword>
<keyword id="KW-0805">Transcription regulation</keyword>
<keyword id="KW-0808">Transferase</keyword>
<gene>
    <name type="primary">HOG1B</name>
    <name type="ORF">J056_002786</name>
</gene>
<name>HOG1B_WALI9</name>
<protein>
    <recommendedName>
        <fullName>Mitogen-activated protein kinase HOG1B</fullName>
        <shortName>MAP kinase HOG1B</shortName>
        <ecNumber>2.7.11.24</ecNumber>
    </recommendedName>
    <alternativeName>
        <fullName>WiHog1B</fullName>
    </alternativeName>
</protein>
<accession>M1T7M3</accession>
<accession>R9A9E4</accession>
<dbReference type="EC" id="2.7.11.24"/>
<dbReference type="EMBL" id="JX573533">
    <property type="protein sequence ID" value="AGG39583.1"/>
    <property type="molecule type" value="Genomic_DNA"/>
</dbReference>
<dbReference type="EMBL" id="KE007249">
    <property type="protein sequence ID" value="EOQ98833.1"/>
    <property type="status" value="ALT_SEQ"/>
    <property type="molecule type" value="Genomic_DNA"/>
</dbReference>
<dbReference type="RefSeq" id="XP_009270326.1">
    <property type="nucleotide sequence ID" value="XM_009272051.1"/>
</dbReference>
<dbReference type="SMR" id="M1T7M3"/>
<dbReference type="STRING" id="1299270.M1T7M3"/>
<dbReference type="GeneID" id="20375738"/>
<dbReference type="KEGG" id="wic:J056_002786"/>
<dbReference type="eggNOG" id="KOG0660">
    <property type="taxonomic scope" value="Eukaryota"/>
</dbReference>
<dbReference type="HOGENOM" id="CLU_000288_181_1_1"/>
<dbReference type="OrthoDB" id="839696at5204"/>
<dbReference type="Proteomes" id="UP000014064">
    <property type="component" value="Unassembled WGS sequence"/>
</dbReference>
<dbReference type="GO" id="GO:0005737">
    <property type="term" value="C:cytoplasm"/>
    <property type="evidence" value="ECO:0007669"/>
    <property type="project" value="UniProtKB-SubCell"/>
</dbReference>
<dbReference type="GO" id="GO:0005634">
    <property type="term" value="C:nucleus"/>
    <property type="evidence" value="ECO:0007669"/>
    <property type="project" value="UniProtKB-SubCell"/>
</dbReference>
<dbReference type="GO" id="GO:0005524">
    <property type="term" value="F:ATP binding"/>
    <property type="evidence" value="ECO:0007669"/>
    <property type="project" value="UniProtKB-KW"/>
</dbReference>
<dbReference type="GO" id="GO:0004707">
    <property type="term" value="F:MAP kinase activity"/>
    <property type="evidence" value="ECO:0007669"/>
    <property type="project" value="UniProtKB-EC"/>
</dbReference>
<dbReference type="GO" id="GO:0106310">
    <property type="term" value="F:protein serine kinase activity"/>
    <property type="evidence" value="ECO:0007669"/>
    <property type="project" value="RHEA"/>
</dbReference>
<dbReference type="GO" id="GO:0051403">
    <property type="term" value="P:stress-activated MAPK cascade"/>
    <property type="evidence" value="ECO:0007669"/>
    <property type="project" value="InterPro"/>
</dbReference>
<dbReference type="CDD" id="cd07856">
    <property type="entry name" value="STKc_Sty1_Hog1"/>
    <property type="match status" value="1"/>
</dbReference>
<dbReference type="FunFam" id="1.10.510.10:FF:000049">
    <property type="entry name" value="Mitogen-activated protein kinase"/>
    <property type="match status" value="1"/>
</dbReference>
<dbReference type="FunFam" id="3.30.200.20:FF:000050">
    <property type="entry name" value="Mitogen-activated protein kinase"/>
    <property type="match status" value="1"/>
</dbReference>
<dbReference type="Gene3D" id="3.30.200.20">
    <property type="entry name" value="Phosphorylase Kinase, domain 1"/>
    <property type="match status" value="1"/>
</dbReference>
<dbReference type="Gene3D" id="1.10.510.10">
    <property type="entry name" value="Transferase(Phosphotransferase) domain 1"/>
    <property type="match status" value="1"/>
</dbReference>
<dbReference type="InterPro" id="IPR011009">
    <property type="entry name" value="Kinase-like_dom_sf"/>
</dbReference>
<dbReference type="InterPro" id="IPR050117">
    <property type="entry name" value="MAP_kinase"/>
</dbReference>
<dbReference type="InterPro" id="IPR003527">
    <property type="entry name" value="MAP_kinase_CS"/>
</dbReference>
<dbReference type="InterPro" id="IPR008352">
    <property type="entry name" value="MAPK_p38-like"/>
</dbReference>
<dbReference type="InterPro" id="IPR038783">
    <property type="entry name" value="MAPK_Sty1/Hog1"/>
</dbReference>
<dbReference type="InterPro" id="IPR000719">
    <property type="entry name" value="Prot_kinase_dom"/>
</dbReference>
<dbReference type="InterPro" id="IPR017441">
    <property type="entry name" value="Protein_kinase_ATP_BS"/>
</dbReference>
<dbReference type="InterPro" id="IPR008271">
    <property type="entry name" value="Ser/Thr_kinase_AS"/>
</dbReference>
<dbReference type="PANTHER" id="PTHR24055">
    <property type="entry name" value="MITOGEN-ACTIVATED PROTEIN KINASE"/>
    <property type="match status" value="1"/>
</dbReference>
<dbReference type="Pfam" id="PF00069">
    <property type="entry name" value="Pkinase"/>
    <property type="match status" value="1"/>
</dbReference>
<dbReference type="PRINTS" id="PR01773">
    <property type="entry name" value="P38MAPKINASE"/>
</dbReference>
<dbReference type="SMART" id="SM00220">
    <property type="entry name" value="S_TKc"/>
    <property type="match status" value="1"/>
</dbReference>
<dbReference type="SUPFAM" id="SSF56112">
    <property type="entry name" value="Protein kinase-like (PK-like)"/>
    <property type="match status" value="1"/>
</dbReference>
<dbReference type="PROSITE" id="PS01351">
    <property type="entry name" value="MAPK"/>
    <property type="match status" value="1"/>
</dbReference>
<dbReference type="PROSITE" id="PS00107">
    <property type="entry name" value="PROTEIN_KINASE_ATP"/>
    <property type="match status" value="1"/>
</dbReference>
<dbReference type="PROSITE" id="PS50011">
    <property type="entry name" value="PROTEIN_KINASE_DOM"/>
    <property type="match status" value="1"/>
</dbReference>
<dbReference type="PROSITE" id="PS00108">
    <property type="entry name" value="PROTEIN_KINASE_ST"/>
    <property type="match status" value="1"/>
</dbReference>
<feature type="chain" id="PRO_0000429123" description="Mitogen-activated protein kinase HOG1B">
    <location>
        <begin position="1"/>
        <end position="368"/>
    </location>
</feature>
<feature type="domain" description="Protein kinase" evidence="2">
    <location>
        <begin position="20"/>
        <end position="299"/>
    </location>
</feature>
<feature type="short sequence motif" description="TXY">
    <location>
        <begin position="171"/>
        <end position="173"/>
    </location>
</feature>
<feature type="active site" description="Proton acceptor" evidence="2 3">
    <location>
        <position position="141"/>
    </location>
</feature>
<feature type="binding site" evidence="2">
    <location>
        <begin position="26"/>
        <end position="34"/>
    </location>
    <ligand>
        <name>ATP</name>
        <dbReference type="ChEBI" id="CHEBI:30616"/>
    </ligand>
</feature>
<feature type="binding site" evidence="2">
    <location>
        <position position="49"/>
    </location>
    <ligand>
        <name>ATP</name>
        <dbReference type="ChEBI" id="CHEBI:30616"/>
    </ligand>
</feature>
<feature type="modified residue" description="Phosphothreonine" evidence="1">
    <location>
        <position position="171"/>
    </location>
</feature>
<feature type="modified residue" description="Phosphotyrosine" evidence="1">
    <location>
        <position position="173"/>
    </location>
</feature>
<comment type="function">
    <text evidence="4">Mitogen-activated protein kinase involved in a signal transduction pathway that is activated by changes in the osmolarity of the extracellular environment. Controls osmotic regulation of transcription of target genes.</text>
</comment>
<comment type="catalytic activity">
    <reaction>
        <text>L-seryl-[protein] + ATP = O-phospho-L-seryl-[protein] + ADP + H(+)</text>
        <dbReference type="Rhea" id="RHEA:17989"/>
        <dbReference type="Rhea" id="RHEA-COMP:9863"/>
        <dbReference type="Rhea" id="RHEA-COMP:11604"/>
        <dbReference type="ChEBI" id="CHEBI:15378"/>
        <dbReference type="ChEBI" id="CHEBI:29999"/>
        <dbReference type="ChEBI" id="CHEBI:30616"/>
        <dbReference type="ChEBI" id="CHEBI:83421"/>
        <dbReference type="ChEBI" id="CHEBI:456216"/>
        <dbReference type="EC" id="2.7.11.24"/>
    </reaction>
</comment>
<comment type="catalytic activity">
    <reaction>
        <text>L-threonyl-[protein] + ATP = O-phospho-L-threonyl-[protein] + ADP + H(+)</text>
        <dbReference type="Rhea" id="RHEA:46608"/>
        <dbReference type="Rhea" id="RHEA-COMP:11060"/>
        <dbReference type="Rhea" id="RHEA-COMP:11605"/>
        <dbReference type="ChEBI" id="CHEBI:15378"/>
        <dbReference type="ChEBI" id="CHEBI:30013"/>
        <dbReference type="ChEBI" id="CHEBI:30616"/>
        <dbReference type="ChEBI" id="CHEBI:61977"/>
        <dbReference type="ChEBI" id="CHEBI:456216"/>
        <dbReference type="EC" id="2.7.11.24"/>
    </reaction>
</comment>
<comment type="cofactor">
    <cofactor evidence="1">
        <name>Mg(2+)</name>
        <dbReference type="ChEBI" id="CHEBI:18420"/>
    </cofactor>
</comment>
<comment type="activity regulation">
    <text evidence="1">Activated by tyrosine and threonine phosphorylation.</text>
</comment>
<comment type="subcellular location">
    <subcellularLocation>
        <location evidence="1">Cytoplasm</location>
    </subcellularLocation>
    <subcellularLocation>
        <location evidence="1">Nucleus</location>
    </subcellularLocation>
</comment>
<comment type="induction">
    <text evidence="4">By hyperosmotic and hypo-osmotic stress.</text>
</comment>
<comment type="domain">
    <text>The TXY motif contains the threonine and tyrosine residues whose phosphorylation activates the MAP kinases.</text>
</comment>
<comment type="PTM">
    <text evidence="1 4">Phosphorylated. Dually phosphorylated on Thr-171 and Tyr-173, which activates the enzyme (By similarity). Rapidly dephosphorylated upon either hypo- or hyperosmotic shock.</text>
</comment>
<comment type="similarity">
    <text evidence="2">Belongs to the protein kinase superfamily. Ser/Thr protein kinase family. MAP kinase subfamily. HOG1 sub-subfamily.</text>
</comment>
<comment type="sequence caution" evidence="5">
    <conflict type="erroneous gene model prediction">
        <sequence resource="EMBL-CDS" id="EOQ98833"/>
    </conflict>
</comment>
<sequence length="368" mass="41837">MADFVNASIFGTLFQITSRYVNLEPVGMGAFGLVCSAKDQLTSSPVAIKKIMKPFSTPVLSKRTYRELKLLKHIRHENIISLSDIFISPSEDIYFVTELLGTDLHRLLTARPLEKQFIQYFLYQILRGLKYVHSAGVVHRDLKPSNILVNENCDLKICDFGLARIQDPQMTGYVSTRYYRAPEIMLTWQKYDVAVDIWSTGCIFAEMLEGKPLFPGKDHVNQFSIITELLGTPPDDVIQTICSENTLRFVQSLPKKPRIPFNEKFKTNDPLALDLVEKMLSFDPRTRITASQALAHPYLAPYHDPNDEPVAAEQFDWSFNDADLPIDTWKVMMYSEILDFHHISQDGDQFLNANGPGTEQASDSSFTV</sequence>
<reference key="1">
    <citation type="journal article" date="2013" name="Extremophiles">
        <title>The HOG signal transduction pathway in the halophilic fungus Wallemia ichthyophaga: identification and characterisation of MAP kinases WiHog1A and WiHog1B.</title>
        <authorList>
            <person name="Konte T."/>
            <person name="Plemenitas A."/>
        </authorList>
    </citation>
    <scope>NUCLEOTIDE SEQUENCE [GENOMIC DNA]</scope>
    <scope>FUNCTION</scope>
    <scope>PHOSPHORYLATION</scope>
    <scope>INDUCTION</scope>
    <source>
        <strain>EXF-994 / CBS 113033</strain>
    </source>
</reference>
<reference key="2">
    <citation type="journal article" date="2013" name="BMC Genomics">
        <title>Genome and transcriptome sequencing of the halophilic fungus Wallemia ichthyophaga: haloadaptations present and absent.</title>
        <authorList>
            <person name="Zajc J."/>
            <person name="Liu Y."/>
            <person name="Dai W."/>
            <person name="Yang Z."/>
            <person name="Hu J."/>
            <person name="Gostincar C."/>
            <person name="Gunde-Cimerman N."/>
        </authorList>
    </citation>
    <scope>NUCLEOTIDE SEQUENCE [LARGE SCALE GENOMIC DNA]</scope>
    <source>
        <strain>EXF-994 / CBS 113033</strain>
    </source>
</reference>